<evidence type="ECO:0000255" key="1">
    <source>
        <dbReference type="HAMAP-Rule" id="MF_00291"/>
    </source>
</evidence>
<evidence type="ECO:0000305" key="2"/>
<feature type="chain" id="PRO_1000115044" description="Small ribosomal subunit protein uS2">
    <location>
        <begin position="1"/>
        <end position="245"/>
    </location>
</feature>
<comment type="similarity">
    <text evidence="1">Belongs to the universal ribosomal protein uS2 family.</text>
</comment>
<gene>
    <name evidence="1" type="primary">rpsB</name>
    <name type="ordered locus">PputW619_4082</name>
</gene>
<proteinExistence type="inferred from homology"/>
<protein>
    <recommendedName>
        <fullName evidence="1">Small ribosomal subunit protein uS2</fullName>
    </recommendedName>
    <alternativeName>
        <fullName evidence="2">30S ribosomal protein S2</fullName>
    </alternativeName>
</protein>
<keyword id="KW-0687">Ribonucleoprotein</keyword>
<keyword id="KW-0689">Ribosomal protein</keyword>
<reference key="1">
    <citation type="submission" date="2008-02" db="EMBL/GenBank/DDBJ databases">
        <title>Complete sequence of Pseudomonas putida W619.</title>
        <authorList>
            <person name="Copeland A."/>
            <person name="Lucas S."/>
            <person name="Lapidus A."/>
            <person name="Barry K."/>
            <person name="Detter J.C."/>
            <person name="Glavina del Rio T."/>
            <person name="Dalin E."/>
            <person name="Tice H."/>
            <person name="Pitluck S."/>
            <person name="Chain P."/>
            <person name="Malfatti S."/>
            <person name="Shin M."/>
            <person name="Vergez L."/>
            <person name="Schmutz J."/>
            <person name="Larimer F."/>
            <person name="Land M."/>
            <person name="Hauser L."/>
            <person name="Kyrpides N."/>
            <person name="Kim E."/>
            <person name="Taghavi S."/>
            <person name="Vangronsveld D."/>
            <person name="van der Lelie D."/>
            <person name="Richardson P."/>
        </authorList>
    </citation>
    <scope>NUCLEOTIDE SEQUENCE [LARGE SCALE GENOMIC DNA]</scope>
    <source>
        <strain>W619</strain>
    </source>
</reference>
<dbReference type="EMBL" id="CP000949">
    <property type="protein sequence ID" value="ACA74562.1"/>
    <property type="molecule type" value="Genomic_DNA"/>
</dbReference>
<dbReference type="SMR" id="B1JBR0"/>
<dbReference type="STRING" id="390235.PputW619_4082"/>
<dbReference type="KEGG" id="ppw:PputW619_4082"/>
<dbReference type="eggNOG" id="COG0052">
    <property type="taxonomic scope" value="Bacteria"/>
</dbReference>
<dbReference type="HOGENOM" id="CLU_040318_1_0_6"/>
<dbReference type="OrthoDB" id="9808036at2"/>
<dbReference type="GO" id="GO:0022627">
    <property type="term" value="C:cytosolic small ribosomal subunit"/>
    <property type="evidence" value="ECO:0007669"/>
    <property type="project" value="TreeGrafter"/>
</dbReference>
<dbReference type="GO" id="GO:0003735">
    <property type="term" value="F:structural constituent of ribosome"/>
    <property type="evidence" value="ECO:0007669"/>
    <property type="project" value="InterPro"/>
</dbReference>
<dbReference type="GO" id="GO:0006412">
    <property type="term" value="P:translation"/>
    <property type="evidence" value="ECO:0007669"/>
    <property type="project" value="UniProtKB-UniRule"/>
</dbReference>
<dbReference type="CDD" id="cd01425">
    <property type="entry name" value="RPS2"/>
    <property type="match status" value="1"/>
</dbReference>
<dbReference type="FunFam" id="1.10.287.610:FF:000001">
    <property type="entry name" value="30S ribosomal protein S2"/>
    <property type="match status" value="1"/>
</dbReference>
<dbReference type="Gene3D" id="3.40.50.10490">
    <property type="entry name" value="Glucose-6-phosphate isomerase like protein, domain 1"/>
    <property type="match status" value="1"/>
</dbReference>
<dbReference type="Gene3D" id="1.10.287.610">
    <property type="entry name" value="Helix hairpin bin"/>
    <property type="match status" value="1"/>
</dbReference>
<dbReference type="HAMAP" id="MF_00291_B">
    <property type="entry name" value="Ribosomal_uS2_B"/>
    <property type="match status" value="1"/>
</dbReference>
<dbReference type="InterPro" id="IPR001865">
    <property type="entry name" value="Ribosomal_uS2"/>
</dbReference>
<dbReference type="InterPro" id="IPR005706">
    <property type="entry name" value="Ribosomal_uS2_bac/mit/plastid"/>
</dbReference>
<dbReference type="InterPro" id="IPR018130">
    <property type="entry name" value="Ribosomal_uS2_CS"/>
</dbReference>
<dbReference type="InterPro" id="IPR023591">
    <property type="entry name" value="Ribosomal_uS2_flav_dom_sf"/>
</dbReference>
<dbReference type="NCBIfam" id="TIGR01011">
    <property type="entry name" value="rpsB_bact"/>
    <property type="match status" value="1"/>
</dbReference>
<dbReference type="PANTHER" id="PTHR12534">
    <property type="entry name" value="30S RIBOSOMAL PROTEIN S2 PROKARYOTIC AND ORGANELLAR"/>
    <property type="match status" value="1"/>
</dbReference>
<dbReference type="PANTHER" id="PTHR12534:SF0">
    <property type="entry name" value="SMALL RIBOSOMAL SUBUNIT PROTEIN US2M"/>
    <property type="match status" value="1"/>
</dbReference>
<dbReference type="Pfam" id="PF00318">
    <property type="entry name" value="Ribosomal_S2"/>
    <property type="match status" value="1"/>
</dbReference>
<dbReference type="PRINTS" id="PR00395">
    <property type="entry name" value="RIBOSOMALS2"/>
</dbReference>
<dbReference type="SUPFAM" id="SSF52313">
    <property type="entry name" value="Ribosomal protein S2"/>
    <property type="match status" value="1"/>
</dbReference>
<dbReference type="PROSITE" id="PS00962">
    <property type="entry name" value="RIBOSOMAL_S2_1"/>
    <property type="match status" value="1"/>
</dbReference>
<dbReference type="PROSITE" id="PS00963">
    <property type="entry name" value="RIBOSOMAL_S2_2"/>
    <property type="match status" value="1"/>
</dbReference>
<sequence length="245" mass="27055">MSQVNMRDMLKAGVHFGHQTRYWNPKMGKYIFGARNKIHIINLEKTLPMFNDALSFVERLAQGKNKIMFVGTKRSAGKIVAEQAARCGSPYVDHRWLGGMLTNYKTIRASIKRLRDLETQAEDGTFAKLTKKEALMRSRDLEKLDRSLGGIKDMGGLPDALFVIDVDHERIAITEANKLGIPVIGVVDTNSSPEGVDYIIPGNDDAIRAIELYMTSMADAVIRGRNNVAGGTEVYAEEAAAPAAE</sequence>
<accession>B1JBR0</accession>
<name>RS2_PSEPW</name>
<organism>
    <name type="scientific">Pseudomonas putida (strain W619)</name>
    <dbReference type="NCBI Taxonomy" id="390235"/>
    <lineage>
        <taxon>Bacteria</taxon>
        <taxon>Pseudomonadati</taxon>
        <taxon>Pseudomonadota</taxon>
        <taxon>Gammaproteobacteria</taxon>
        <taxon>Pseudomonadales</taxon>
        <taxon>Pseudomonadaceae</taxon>
        <taxon>Pseudomonas</taxon>
    </lineage>
</organism>